<protein>
    <recommendedName>
        <fullName evidence="2">ATP synthase subunit alpha, chloroplastic</fullName>
        <ecNumber evidence="2">7.1.2.2</ecNumber>
    </recommendedName>
    <alternativeName>
        <fullName evidence="2">ATP synthase F1 sector subunit alpha</fullName>
    </alternativeName>
    <alternativeName>
        <fullName evidence="2">F-ATPase subunit alpha</fullName>
    </alternativeName>
</protein>
<accession>A4QLR8</accession>
<comment type="function">
    <text evidence="2">Produces ATP from ADP in the presence of a proton gradient across the membrane. The alpha chain is a regulatory subunit.</text>
</comment>
<comment type="catalytic activity">
    <reaction evidence="2">
        <text>ATP + H2O + 4 H(+)(in) = ADP + phosphate + 5 H(+)(out)</text>
        <dbReference type="Rhea" id="RHEA:57720"/>
        <dbReference type="ChEBI" id="CHEBI:15377"/>
        <dbReference type="ChEBI" id="CHEBI:15378"/>
        <dbReference type="ChEBI" id="CHEBI:30616"/>
        <dbReference type="ChEBI" id="CHEBI:43474"/>
        <dbReference type="ChEBI" id="CHEBI:456216"/>
        <dbReference type="EC" id="7.1.2.2"/>
    </reaction>
</comment>
<comment type="subunit">
    <text evidence="2">F-type ATPases have 2 components, CF(1) - the catalytic core - and CF(0) - the membrane proton channel. CF(1) has five subunits: alpha(3), beta(3), gamma(1), delta(1), epsilon(1). CF(0) has four main subunits: a, b, b' and c.</text>
</comment>
<comment type="subcellular location">
    <subcellularLocation>
        <location evidence="2">Plastid</location>
        <location evidence="2">Chloroplast thylakoid membrane</location>
        <topology evidence="2">Peripheral membrane protein</topology>
    </subcellularLocation>
</comment>
<comment type="similarity">
    <text evidence="2">Belongs to the ATPase alpha/beta chains family.</text>
</comment>
<gene>
    <name evidence="2" type="primary">atpA</name>
</gene>
<proteinExistence type="inferred from homology"/>
<dbReference type="EC" id="7.1.2.2" evidence="2"/>
<dbReference type="EMBL" id="AP009376">
    <property type="protein sequence ID" value="BAF50623.1"/>
    <property type="molecule type" value="Genomic_DNA"/>
</dbReference>
<dbReference type="RefSeq" id="YP_001123799.1">
    <property type="nucleotide sequence ID" value="NC_009275.1"/>
</dbReference>
<dbReference type="SMR" id="A4QLR8"/>
<dbReference type="GeneID" id="4962216"/>
<dbReference type="GO" id="GO:0009535">
    <property type="term" value="C:chloroplast thylakoid membrane"/>
    <property type="evidence" value="ECO:0007669"/>
    <property type="project" value="UniProtKB-SubCell"/>
</dbReference>
<dbReference type="GO" id="GO:0045259">
    <property type="term" value="C:proton-transporting ATP synthase complex"/>
    <property type="evidence" value="ECO:0007669"/>
    <property type="project" value="UniProtKB-KW"/>
</dbReference>
<dbReference type="GO" id="GO:0043531">
    <property type="term" value="F:ADP binding"/>
    <property type="evidence" value="ECO:0007669"/>
    <property type="project" value="TreeGrafter"/>
</dbReference>
<dbReference type="GO" id="GO:0005524">
    <property type="term" value="F:ATP binding"/>
    <property type="evidence" value="ECO:0007669"/>
    <property type="project" value="UniProtKB-UniRule"/>
</dbReference>
<dbReference type="GO" id="GO:0046933">
    <property type="term" value="F:proton-transporting ATP synthase activity, rotational mechanism"/>
    <property type="evidence" value="ECO:0007669"/>
    <property type="project" value="UniProtKB-UniRule"/>
</dbReference>
<dbReference type="CDD" id="cd18113">
    <property type="entry name" value="ATP-synt_F1_alpha_C"/>
    <property type="match status" value="1"/>
</dbReference>
<dbReference type="CDD" id="cd18116">
    <property type="entry name" value="ATP-synt_F1_alpha_N"/>
    <property type="match status" value="1"/>
</dbReference>
<dbReference type="CDD" id="cd01132">
    <property type="entry name" value="F1-ATPase_alpha_CD"/>
    <property type="match status" value="1"/>
</dbReference>
<dbReference type="FunFam" id="1.20.150.20:FF:000001">
    <property type="entry name" value="ATP synthase subunit alpha"/>
    <property type="match status" value="1"/>
</dbReference>
<dbReference type="FunFam" id="2.40.30.20:FF:000001">
    <property type="entry name" value="ATP synthase subunit alpha"/>
    <property type="match status" value="1"/>
</dbReference>
<dbReference type="FunFam" id="3.40.50.300:FF:000002">
    <property type="entry name" value="ATP synthase subunit alpha"/>
    <property type="match status" value="1"/>
</dbReference>
<dbReference type="Gene3D" id="2.40.30.20">
    <property type="match status" value="1"/>
</dbReference>
<dbReference type="Gene3D" id="1.20.150.20">
    <property type="entry name" value="ATP synthase alpha/beta chain, C-terminal domain"/>
    <property type="match status" value="1"/>
</dbReference>
<dbReference type="Gene3D" id="3.40.50.300">
    <property type="entry name" value="P-loop containing nucleotide triphosphate hydrolases"/>
    <property type="match status" value="1"/>
</dbReference>
<dbReference type="HAMAP" id="MF_01346">
    <property type="entry name" value="ATP_synth_alpha_bact"/>
    <property type="match status" value="1"/>
</dbReference>
<dbReference type="InterPro" id="IPR023366">
    <property type="entry name" value="ATP_synth_asu-like_sf"/>
</dbReference>
<dbReference type="InterPro" id="IPR000793">
    <property type="entry name" value="ATP_synth_asu_C"/>
</dbReference>
<dbReference type="InterPro" id="IPR038376">
    <property type="entry name" value="ATP_synth_asu_C_sf"/>
</dbReference>
<dbReference type="InterPro" id="IPR033732">
    <property type="entry name" value="ATP_synth_F1_a_nt-bd_dom"/>
</dbReference>
<dbReference type="InterPro" id="IPR005294">
    <property type="entry name" value="ATP_synth_F1_asu"/>
</dbReference>
<dbReference type="InterPro" id="IPR020003">
    <property type="entry name" value="ATPase_a/bsu_AS"/>
</dbReference>
<dbReference type="InterPro" id="IPR004100">
    <property type="entry name" value="ATPase_F1/V1/A1_a/bsu_N"/>
</dbReference>
<dbReference type="InterPro" id="IPR036121">
    <property type="entry name" value="ATPase_F1/V1/A1_a/bsu_N_sf"/>
</dbReference>
<dbReference type="InterPro" id="IPR000194">
    <property type="entry name" value="ATPase_F1/V1/A1_a/bsu_nucl-bd"/>
</dbReference>
<dbReference type="InterPro" id="IPR027417">
    <property type="entry name" value="P-loop_NTPase"/>
</dbReference>
<dbReference type="NCBIfam" id="TIGR00962">
    <property type="entry name" value="atpA"/>
    <property type="match status" value="1"/>
</dbReference>
<dbReference type="NCBIfam" id="NF009884">
    <property type="entry name" value="PRK13343.1"/>
    <property type="match status" value="1"/>
</dbReference>
<dbReference type="PANTHER" id="PTHR48082">
    <property type="entry name" value="ATP SYNTHASE SUBUNIT ALPHA, MITOCHONDRIAL"/>
    <property type="match status" value="1"/>
</dbReference>
<dbReference type="PANTHER" id="PTHR48082:SF2">
    <property type="entry name" value="ATP SYNTHASE SUBUNIT ALPHA, MITOCHONDRIAL"/>
    <property type="match status" value="1"/>
</dbReference>
<dbReference type="Pfam" id="PF00006">
    <property type="entry name" value="ATP-synt_ab"/>
    <property type="match status" value="1"/>
</dbReference>
<dbReference type="Pfam" id="PF00306">
    <property type="entry name" value="ATP-synt_ab_C"/>
    <property type="match status" value="1"/>
</dbReference>
<dbReference type="Pfam" id="PF02874">
    <property type="entry name" value="ATP-synt_ab_N"/>
    <property type="match status" value="1"/>
</dbReference>
<dbReference type="PIRSF" id="PIRSF039088">
    <property type="entry name" value="F_ATPase_subunit_alpha"/>
    <property type="match status" value="1"/>
</dbReference>
<dbReference type="SUPFAM" id="SSF47917">
    <property type="entry name" value="C-terminal domain of alpha and beta subunits of F1 ATP synthase"/>
    <property type="match status" value="1"/>
</dbReference>
<dbReference type="SUPFAM" id="SSF50615">
    <property type="entry name" value="N-terminal domain of alpha and beta subunits of F1 ATP synthase"/>
    <property type="match status" value="1"/>
</dbReference>
<dbReference type="SUPFAM" id="SSF52540">
    <property type="entry name" value="P-loop containing nucleoside triphosphate hydrolases"/>
    <property type="match status" value="1"/>
</dbReference>
<dbReference type="PROSITE" id="PS00152">
    <property type="entry name" value="ATPASE_ALPHA_BETA"/>
    <property type="match status" value="1"/>
</dbReference>
<organism>
    <name type="scientific">Nasturtium officinale</name>
    <name type="common">Watercress</name>
    <name type="synonym">Rorippa nasturtium-aquaticum</name>
    <dbReference type="NCBI Taxonomy" id="65948"/>
    <lineage>
        <taxon>Eukaryota</taxon>
        <taxon>Viridiplantae</taxon>
        <taxon>Streptophyta</taxon>
        <taxon>Embryophyta</taxon>
        <taxon>Tracheophyta</taxon>
        <taxon>Spermatophyta</taxon>
        <taxon>Magnoliopsida</taxon>
        <taxon>eudicotyledons</taxon>
        <taxon>Gunneridae</taxon>
        <taxon>Pentapetalae</taxon>
        <taxon>rosids</taxon>
        <taxon>malvids</taxon>
        <taxon>Brassicales</taxon>
        <taxon>Brassicaceae</taxon>
        <taxon>Cardamineae</taxon>
        <taxon>Nasturtium</taxon>
    </lineage>
</organism>
<geneLocation type="chloroplast"/>
<sequence length="504" mass="54890">MVTIRADEISNIIRERIEQYNREVTIVNTGTVLQVGDGIARIYGLDEVMAGELVEFEEGTIGIALNLESNNVGVVLMGDGLMIQEGSSVKATGKIAQIPVSEAYLGRVINALANPIDGRGKISASESRLIESPAPGIISRRSVYEPLQTGLIAIDSMIPIGRGQRELIIGDRQTGKTAVATDTILNQQGQNVICVYVAIGQKASSVAQVVTSLQERGAMEYTIVVAETADAPAALQYLAPYTGAALAEYFMYREQHTLIIYDDLSKQAQAYRQMSLLLRRPPGREAYPGDVFYLHSRLLERAAKLSSQLGEGSMTALPIVETQSGDVSAYIPTNVISITDGQIFLSADLFNAGIRPAINVGISVSRVGSAAQIKAMKQVAGKLKLELAQFAELEAFAQFSSDLDKATQNQLARGQRLRELLKQSQSAPLTVEEQVMTIYTGTNGYLDGLEIGQVRKFLVQLRTYLKTNKPQFQEIISSTKTLTPEAESVLKEGIQEQLERFLLQ</sequence>
<reference key="1">
    <citation type="submission" date="2007-03" db="EMBL/GenBank/DDBJ databases">
        <title>Sequencing analysis of Nasturtium officinale chloroplast DNA.</title>
        <authorList>
            <person name="Hosouchi T."/>
            <person name="Tsuruoka H."/>
            <person name="Kotani H."/>
        </authorList>
    </citation>
    <scope>NUCLEOTIDE SEQUENCE [LARGE SCALE GENOMIC DNA]</scope>
</reference>
<keyword id="KW-0066">ATP synthesis</keyword>
<keyword id="KW-0067">ATP-binding</keyword>
<keyword id="KW-0139">CF(1)</keyword>
<keyword id="KW-0150">Chloroplast</keyword>
<keyword id="KW-0375">Hydrogen ion transport</keyword>
<keyword id="KW-0406">Ion transport</keyword>
<keyword id="KW-0472">Membrane</keyword>
<keyword id="KW-0547">Nucleotide-binding</keyword>
<keyword id="KW-0597">Phosphoprotein</keyword>
<keyword id="KW-0934">Plastid</keyword>
<keyword id="KW-0793">Thylakoid</keyword>
<keyword id="KW-1278">Translocase</keyword>
<keyword id="KW-0813">Transport</keyword>
<evidence type="ECO:0000250" key="1">
    <source>
        <dbReference type="UniProtKB" id="P56757"/>
    </source>
</evidence>
<evidence type="ECO:0000255" key="2">
    <source>
        <dbReference type="HAMAP-Rule" id="MF_01346"/>
    </source>
</evidence>
<feature type="chain" id="PRO_0000339098" description="ATP synthase subunit alpha, chloroplastic">
    <location>
        <begin position="1"/>
        <end position="504"/>
    </location>
</feature>
<feature type="binding site" evidence="2">
    <location>
        <begin position="170"/>
        <end position="177"/>
    </location>
    <ligand>
        <name>ATP</name>
        <dbReference type="ChEBI" id="CHEBI:30616"/>
    </ligand>
</feature>
<feature type="site" description="Required for activity" evidence="2">
    <location>
        <position position="363"/>
    </location>
</feature>
<feature type="modified residue" description="Phosphothreonine" evidence="1">
    <location>
        <position position="257"/>
    </location>
</feature>
<name>ATPA_NASOF</name>